<comment type="function">
    <text evidence="1">RuBisCO catalyzes two reactions: the carboxylation of D-ribulose 1,5-bisphosphate, the primary event in carbon dioxide fixation, as well as the oxidative fragmentation of the pentose substrate. Both reactions occur simultaneously and in competition at the same active site (By similarity).</text>
</comment>
<comment type="catalytic activity">
    <reaction>
        <text>2 (2R)-3-phosphoglycerate + 2 H(+) = D-ribulose 1,5-bisphosphate + CO2 + H2O</text>
        <dbReference type="Rhea" id="RHEA:23124"/>
        <dbReference type="ChEBI" id="CHEBI:15377"/>
        <dbReference type="ChEBI" id="CHEBI:15378"/>
        <dbReference type="ChEBI" id="CHEBI:16526"/>
        <dbReference type="ChEBI" id="CHEBI:57870"/>
        <dbReference type="ChEBI" id="CHEBI:58272"/>
        <dbReference type="EC" id="4.1.1.39"/>
    </reaction>
</comment>
<comment type="catalytic activity">
    <reaction>
        <text>D-ribulose 1,5-bisphosphate + O2 = 2-phosphoglycolate + (2R)-3-phosphoglycerate + 2 H(+)</text>
        <dbReference type="Rhea" id="RHEA:36631"/>
        <dbReference type="ChEBI" id="CHEBI:15378"/>
        <dbReference type="ChEBI" id="CHEBI:15379"/>
        <dbReference type="ChEBI" id="CHEBI:57870"/>
        <dbReference type="ChEBI" id="CHEBI:58033"/>
        <dbReference type="ChEBI" id="CHEBI:58272"/>
    </reaction>
</comment>
<comment type="cofactor">
    <cofactor evidence="1">
        <name>Mg(2+)</name>
        <dbReference type="ChEBI" id="CHEBI:18420"/>
    </cofactor>
    <text evidence="1">Binds 1 Mg(2+) ion per subunit.</text>
</comment>
<comment type="subunit">
    <text evidence="1">Homodimer.</text>
</comment>
<comment type="subcellular location">
    <subcellularLocation>
        <location evidence="4">Plastid</location>
        <location evidence="4">Chloroplast membrane</location>
    </subcellularLocation>
    <text>In this organism the plastid is the result of a secondary endosymbiosis event, and thus is found within the endomembrane system, necessitating a complex targeting process.</text>
</comment>
<comment type="miscellaneous">
    <text evidence="1">The basic functional RuBisCO is composed of a large chain homodimer in a 'head-to-tail' conformation. In contrast to form I RuBisCO, the form II RuBisCO are composed solely of large subunits (By similarity).</text>
</comment>
<comment type="miscellaneous">
    <text>This protein is suggested in PubMed:15843030 to be first cotranslationally imported into the ER up to the stop-transfer signal, so that the N-terminal region of the transit peptide is in the lumen of the ER while the rest of the protein remains in the cytoplasm. Maintaining this topology, proteins are directed to the Golgi and sorted into vesicles that will fuse with the outermost plastid membrane, exposing the transit peptide to the Toc/Tic apparatus, which draws the entire protein across the remaining membranes.</text>
</comment>
<comment type="similarity">
    <text evidence="4">Belongs to the RuBisCO large chain family. Type II subfamily.</text>
</comment>
<comment type="caution">
    <text evidence="4">Note that unlike other eukaryotes, peridinin-containing dinoflagellates have a nuclear-encoded chloroplast-targeted form II RuBisCO.</text>
</comment>
<protein>
    <recommendedName>
        <fullName>Ribulose bisphosphate carboxylase, chloroplastic</fullName>
        <shortName>RuBisCO</shortName>
        <ecNumber>4.1.1.39</ecNumber>
    </recommendedName>
</protein>
<proteinExistence type="evidence at transcript level"/>
<evidence type="ECO:0000250" key="1"/>
<evidence type="ECO:0000255" key="2"/>
<evidence type="ECO:0000255" key="3">
    <source>
        <dbReference type="PROSITE-ProRule" id="PRU10114"/>
    </source>
</evidence>
<evidence type="ECO:0000305" key="4"/>
<organism>
    <name type="scientific">Heterocapsa triquetra</name>
    <name type="common">Dinoflagellate</name>
    <name type="synonym">Glenodinium triquetrum</name>
    <dbReference type="NCBI Taxonomy" id="66468"/>
    <lineage>
        <taxon>Eukaryota</taxon>
        <taxon>Sar</taxon>
        <taxon>Alveolata</taxon>
        <taxon>Dinophyceae</taxon>
        <taxon>Peridiniales</taxon>
        <taxon>Heterocapsaceae</taxon>
        <taxon>Heterocapsa</taxon>
    </lineage>
</organism>
<feature type="transit peptide" description="Chloroplast" evidence="2">
    <location>
        <begin position="1"/>
        <end position="55"/>
    </location>
</feature>
<feature type="chain" id="PRO_0000042970" description="Ribulose bisphosphate carboxylase, chloroplastic">
    <location>
        <begin position="56"/>
        <end position="740"/>
    </location>
</feature>
<feature type="transmembrane region" description="Helical; Note=Stop-transfer" evidence="2">
    <location>
        <begin position="56"/>
        <end position="76"/>
    </location>
</feature>
<feature type="active site" description="Proton acceptor" evidence="1">
    <location>
        <position position="268"/>
    </location>
</feature>
<feature type="active site" description="Proton acceptor" evidence="1">
    <location>
        <position position="389"/>
    </location>
</feature>
<feature type="binding site" description="in homodimeric partner" evidence="1">
    <location>
        <position position="213"/>
    </location>
    <ligand>
        <name>substrate</name>
    </ligand>
</feature>
<feature type="binding site" evidence="1">
    <location>
        <position position="270"/>
    </location>
    <ligand>
        <name>substrate</name>
    </ligand>
</feature>
<feature type="binding site" description="via carbamate group" evidence="3">
    <location>
        <position position="293"/>
    </location>
    <ligand>
        <name>Mg(2+)</name>
        <dbReference type="ChEBI" id="CHEBI:18420"/>
    </ligand>
</feature>
<feature type="binding site" evidence="3">
    <location>
        <position position="295"/>
    </location>
    <ligand>
        <name>Mg(2+)</name>
        <dbReference type="ChEBI" id="CHEBI:18420"/>
    </ligand>
</feature>
<feature type="binding site" evidence="3">
    <location>
        <position position="296"/>
    </location>
    <ligand>
        <name>Mg(2+)</name>
        <dbReference type="ChEBI" id="CHEBI:18420"/>
    </ligand>
</feature>
<feature type="binding site" evidence="1">
    <location>
        <position position="390"/>
    </location>
    <ligand>
        <name>substrate</name>
    </ligand>
</feature>
<feature type="binding site" evidence="1">
    <location>
        <position position="423"/>
    </location>
    <ligand>
        <name>substrate</name>
    </ligand>
</feature>
<feature type="binding site" evidence="1">
    <location>
        <position position="470"/>
    </location>
    <ligand>
        <name>substrate</name>
    </ligand>
</feature>
<feature type="site" description="Transition state stabilizer" evidence="1">
    <location>
        <position position="431"/>
    </location>
</feature>
<feature type="modified residue" description="N6-carboxylysine" evidence="3">
    <location>
        <position position="293"/>
    </location>
</feature>
<dbReference type="EC" id="4.1.1.39"/>
<dbReference type="EMBL" id="AY826897">
    <property type="protein sequence ID" value="AAW79358.1"/>
    <property type="molecule type" value="mRNA"/>
</dbReference>
<dbReference type="SMR" id="Q5ENN5"/>
<dbReference type="GO" id="GO:0031969">
    <property type="term" value="C:chloroplast membrane"/>
    <property type="evidence" value="ECO:0007669"/>
    <property type="project" value="UniProtKB-SubCell"/>
</dbReference>
<dbReference type="GO" id="GO:0000287">
    <property type="term" value="F:magnesium ion binding"/>
    <property type="evidence" value="ECO:0007669"/>
    <property type="project" value="InterPro"/>
</dbReference>
<dbReference type="GO" id="GO:0004497">
    <property type="term" value="F:monooxygenase activity"/>
    <property type="evidence" value="ECO:0007669"/>
    <property type="project" value="UniProtKB-KW"/>
</dbReference>
<dbReference type="GO" id="GO:0016984">
    <property type="term" value="F:ribulose-bisphosphate carboxylase activity"/>
    <property type="evidence" value="ECO:0007669"/>
    <property type="project" value="UniProtKB-EC"/>
</dbReference>
<dbReference type="GO" id="GO:0019253">
    <property type="term" value="P:reductive pentose-phosphate cycle"/>
    <property type="evidence" value="ECO:0007669"/>
    <property type="project" value="UniProtKB-KW"/>
</dbReference>
<dbReference type="CDD" id="cd08211">
    <property type="entry name" value="RuBisCO_large_II"/>
    <property type="match status" value="1"/>
</dbReference>
<dbReference type="Gene3D" id="3.20.20.110">
    <property type="entry name" value="Ribulose bisphosphate carboxylase, large subunit, C-terminal domain"/>
    <property type="match status" value="1"/>
</dbReference>
<dbReference type="Gene3D" id="3.30.70.150">
    <property type="entry name" value="RuBisCO large subunit, N-terminal domain"/>
    <property type="match status" value="1"/>
</dbReference>
<dbReference type="InterPro" id="IPR033966">
    <property type="entry name" value="RuBisCO"/>
</dbReference>
<dbReference type="InterPro" id="IPR020878">
    <property type="entry name" value="RuBisCo_large_chain_AS"/>
</dbReference>
<dbReference type="InterPro" id="IPR000685">
    <property type="entry name" value="RuBisCO_lsu_C"/>
</dbReference>
<dbReference type="InterPro" id="IPR036376">
    <property type="entry name" value="RuBisCO_lsu_C_sf"/>
</dbReference>
<dbReference type="InterPro" id="IPR017443">
    <property type="entry name" value="RuBisCO_lsu_fd_N"/>
</dbReference>
<dbReference type="InterPro" id="IPR036422">
    <property type="entry name" value="RuBisCO_lsu_N_sf"/>
</dbReference>
<dbReference type="InterPro" id="IPR020871">
    <property type="entry name" value="RuBisCO_lsuII"/>
</dbReference>
<dbReference type="NCBIfam" id="NF010002">
    <property type="entry name" value="PRK13475.1"/>
    <property type="match status" value="1"/>
</dbReference>
<dbReference type="PANTHER" id="PTHR42704">
    <property type="entry name" value="RIBULOSE BISPHOSPHATE CARBOXYLASE"/>
    <property type="match status" value="1"/>
</dbReference>
<dbReference type="PANTHER" id="PTHR42704:SF17">
    <property type="entry name" value="RIBULOSE BISPHOSPHATE CARBOXYLASE LARGE CHAIN"/>
    <property type="match status" value="1"/>
</dbReference>
<dbReference type="Pfam" id="PF00016">
    <property type="entry name" value="RuBisCO_large"/>
    <property type="match status" value="1"/>
</dbReference>
<dbReference type="Pfam" id="PF02788">
    <property type="entry name" value="RuBisCO_large_N"/>
    <property type="match status" value="1"/>
</dbReference>
<dbReference type="SUPFAM" id="SSF51649">
    <property type="entry name" value="RuBisCo, C-terminal domain"/>
    <property type="match status" value="1"/>
</dbReference>
<dbReference type="SUPFAM" id="SSF54966">
    <property type="entry name" value="RuBisCO, large subunit, small (N-terminal) domain"/>
    <property type="match status" value="1"/>
</dbReference>
<dbReference type="PROSITE" id="PS00157">
    <property type="entry name" value="RUBISCO_LARGE"/>
    <property type="match status" value="1"/>
</dbReference>
<sequence>MPSSSFTTGLALGAGALVGANAFVAPTAKTTNLRAPTQEASLQVAASQQTEQPAPSTSALPWAFGAGACLALAAGGQRKQRSAIAQGRATVLPTASPVVRRALDQSSRYADLSLSEEQLIANGKHVLVSYIMKPKAGYDYLATAAHFAAESSTGTNVNVCTTDDFTKSVDALVYYIDPENEECKIAYPNLLFDRNIIDGRAMMCSVLTLTIGNNQGMGDVEYGKIYDIYFPPSYLRLFDGPSCNIIDMWRILGRGTTDGGLVVGTIIKPKLGLQPKPFGEACYAFWQGGDFIKNDEPQGNQPFCQMNEVIPEVVKAMRAAIKETGVAKLFSANITADDPAEMIARGKYVLAQFGPLSENCAFLVDGYVAGGTAVTVARRNFPKQFLHYHRAGHGSVTSPQTQRGYTAFVHTKLSRVQGASGIHVGTMSFGKMEGDASDKNIAFMLQDDAADGPYYHQTWEGMAETTPIISGGMNALRLPAFFENLGHSNVILTAGGGAFGHKDGPKQGATSCRQGEEAWKLWKAGVYGSVSLSDGVIEYAKTHEEIKGAFLTFQKDADQIYPGWKEKLGYTGESSVQAASFDWKKKAAAAAFAGSSTQARTVGVQMRHGYDDVATNTFYYDKRLESFGQQEFFNQVGYLPDGTPMNTAGNLTNHPETIGPDPHINGSELPQAVFVNSIGYLPDGTAMNQAGNAVNHPETMGPDLHMAGSPLPPPLKGYLNDIGYLSDGTPMATAGNLSNH</sequence>
<name>RBL2_HETTR</name>
<keyword id="KW-0113">Calvin cycle</keyword>
<keyword id="KW-0120">Carbon dioxide fixation</keyword>
<keyword id="KW-0150">Chloroplast</keyword>
<keyword id="KW-0456">Lyase</keyword>
<keyword id="KW-0460">Magnesium</keyword>
<keyword id="KW-0472">Membrane</keyword>
<keyword id="KW-0479">Metal-binding</keyword>
<keyword id="KW-0503">Monooxygenase</keyword>
<keyword id="KW-0560">Oxidoreductase</keyword>
<keyword id="KW-0601">Photorespiration</keyword>
<keyword id="KW-0602">Photosynthesis</keyword>
<keyword id="KW-0934">Plastid</keyword>
<keyword id="KW-0809">Transit peptide</keyword>
<keyword id="KW-0812">Transmembrane</keyword>
<keyword id="KW-1133">Transmembrane helix</keyword>
<reference key="1">
    <citation type="journal article" date="2005" name="J. Mol. Biol.">
        <title>Complex protein targeting to dinoflagellate plastids.</title>
        <authorList>
            <person name="Patron N.J."/>
            <person name="Waller R.F."/>
            <person name="Archibald J.M."/>
            <person name="Keeling P.J."/>
        </authorList>
    </citation>
    <scope>NUCLEOTIDE SEQUENCE [MRNA]</scope>
    <source>
        <strain>CCMP449</strain>
    </source>
</reference>
<gene>
    <name type="primary">rbcL</name>
</gene>
<accession>Q5ENN5</accession>